<gene>
    <name evidence="1" type="primary">tdh</name>
    <name type="ordered locus">xcc-b100_3408</name>
</gene>
<comment type="function">
    <text evidence="1">Catalyzes the NAD(+)-dependent oxidation of L-threonine to 2-amino-3-ketobutyrate.</text>
</comment>
<comment type="catalytic activity">
    <reaction evidence="1">
        <text>L-threonine + NAD(+) = (2S)-2-amino-3-oxobutanoate + NADH + H(+)</text>
        <dbReference type="Rhea" id="RHEA:13161"/>
        <dbReference type="ChEBI" id="CHEBI:15378"/>
        <dbReference type="ChEBI" id="CHEBI:57540"/>
        <dbReference type="ChEBI" id="CHEBI:57926"/>
        <dbReference type="ChEBI" id="CHEBI:57945"/>
        <dbReference type="ChEBI" id="CHEBI:78948"/>
        <dbReference type="EC" id="1.1.1.103"/>
    </reaction>
</comment>
<comment type="cofactor">
    <cofactor evidence="1">
        <name>Zn(2+)</name>
        <dbReference type="ChEBI" id="CHEBI:29105"/>
    </cofactor>
    <text evidence="1">Binds 2 Zn(2+) ions per subunit.</text>
</comment>
<comment type="pathway">
    <text evidence="1">Amino-acid degradation; L-threonine degradation via oxydo-reductase pathway; glycine from L-threonine: step 1/2.</text>
</comment>
<comment type="subunit">
    <text evidence="1">Homotetramer.</text>
</comment>
<comment type="subcellular location">
    <subcellularLocation>
        <location evidence="1">Cytoplasm</location>
    </subcellularLocation>
</comment>
<comment type="similarity">
    <text evidence="1">Belongs to the zinc-containing alcohol dehydrogenase family.</text>
</comment>
<proteinExistence type="inferred from homology"/>
<reference key="1">
    <citation type="journal article" date="2008" name="J. Biotechnol.">
        <title>The genome of Xanthomonas campestris pv. campestris B100 and its use for the reconstruction of metabolic pathways involved in xanthan biosynthesis.</title>
        <authorList>
            <person name="Vorhoelter F.-J."/>
            <person name="Schneiker S."/>
            <person name="Goesmann A."/>
            <person name="Krause L."/>
            <person name="Bekel T."/>
            <person name="Kaiser O."/>
            <person name="Linke B."/>
            <person name="Patschkowski T."/>
            <person name="Rueckert C."/>
            <person name="Schmid J."/>
            <person name="Sidhu V.K."/>
            <person name="Sieber V."/>
            <person name="Tauch A."/>
            <person name="Watt S.A."/>
            <person name="Weisshaar B."/>
            <person name="Becker A."/>
            <person name="Niehaus K."/>
            <person name="Puehler A."/>
        </authorList>
    </citation>
    <scope>NUCLEOTIDE SEQUENCE [LARGE SCALE GENOMIC DNA]</scope>
    <source>
        <strain>B100</strain>
    </source>
</reference>
<name>TDH_XANCB</name>
<keyword id="KW-0963">Cytoplasm</keyword>
<keyword id="KW-0479">Metal-binding</keyword>
<keyword id="KW-0520">NAD</keyword>
<keyword id="KW-0560">Oxidoreductase</keyword>
<keyword id="KW-0862">Zinc</keyword>
<evidence type="ECO:0000255" key="1">
    <source>
        <dbReference type="HAMAP-Rule" id="MF_00627"/>
    </source>
</evidence>
<feature type="chain" id="PRO_1000130572" description="L-threonine 3-dehydrogenase">
    <location>
        <begin position="1"/>
        <end position="340"/>
    </location>
</feature>
<feature type="active site" description="Charge relay system" evidence="1">
    <location>
        <position position="40"/>
    </location>
</feature>
<feature type="active site" description="Charge relay system" evidence="1">
    <location>
        <position position="43"/>
    </location>
</feature>
<feature type="binding site" evidence="1">
    <location>
        <position position="38"/>
    </location>
    <ligand>
        <name>Zn(2+)</name>
        <dbReference type="ChEBI" id="CHEBI:29105"/>
        <label>1</label>
        <note>catalytic</note>
    </ligand>
</feature>
<feature type="binding site" evidence="1">
    <location>
        <position position="63"/>
    </location>
    <ligand>
        <name>Zn(2+)</name>
        <dbReference type="ChEBI" id="CHEBI:29105"/>
        <label>1</label>
        <note>catalytic</note>
    </ligand>
</feature>
<feature type="binding site" evidence="1">
    <location>
        <position position="64"/>
    </location>
    <ligand>
        <name>Zn(2+)</name>
        <dbReference type="ChEBI" id="CHEBI:29105"/>
        <label>1</label>
        <note>catalytic</note>
    </ligand>
</feature>
<feature type="binding site" evidence="1">
    <location>
        <position position="93"/>
    </location>
    <ligand>
        <name>Zn(2+)</name>
        <dbReference type="ChEBI" id="CHEBI:29105"/>
        <label>2</label>
    </ligand>
</feature>
<feature type="binding site" evidence="1">
    <location>
        <position position="96"/>
    </location>
    <ligand>
        <name>Zn(2+)</name>
        <dbReference type="ChEBI" id="CHEBI:29105"/>
        <label>2</label>
    </ligand>
</feature>
<feature type="binding site" evidence="1">
    <location>
        <position position="99"/>
    </location>
    <ligand>
        <name>Zn(2+)</name>
        <dbReference type="ChEBI" id="CHEBI:29105"/>
        <label>2</label>
    </ligand>
</feature>
<feature type="binding site" evidence="1">
    <location>
        <position position="107"/>
    </location>
    <ligand>
        <name>Zn(2+)</name>
        <dbReference type="ChEBI" id="CHEBI:29105"/>
        <label>2</label>
    </ligand>
</feature>
<feature type="binding site" evidence="1">
    <location>
        <position position="175"/>
    </location>
    <ligand>
        <name>NAD(+)</name>
        <dbReference type="ChEBI" id="CHEBI:57540"/>
    </ligand>
</feature>
<feature type="binding site" evidence="1">
    <location>
        <position position="195"/>
    </location>
    <ligand>
        <name>NAD(+)</name>
        <dbReference type="ChEBI" id="CHEBI:57540"/>
    </ligand>
</feature>
<feature type="binding site" evidence="1">
    <location>
        <position position="200"/>
    </location>
    <ligand>
        <name>NAD(+)</name>
        <dbReference type="ChEBI" id="CHEBI:57540"/>
    </ligand>
</feature>
<feature type="binding site" evidence="1">
    <location>
        <begin position="261"/>
        <end position="263"/>
    </location>
    <ligand>
        <name>NAD(+)</name>
        <dbReference type="ChEBI" id="CHEBI:57540"/>
    </ligand>
</feature>
<feature type="binding site" evidence="1">
    <location>
        <begin position="285"/>
        <end position="286"/>
    </location>
    <ligand>
        <name>NAD(+)</name>
        <dbReference type="ChEBI" id="CHEBI:57540"/>
    </ligand>
</feature>
<feature type="site" description="Important for catalytic activity for the proton relay mechanism but does not participate directly in the coordination of zinc atom" evidence="1">
    <location>
        <position position="148"/>
    </location>
</feature>
<protein>
    <recommendedName>
        <fullName evidence="1">L-threonine 3-dehydrogenase</fullName>
        <shortName evidence="1">TDH</shortName>
        <ecNumber evidence="1">1.1.1.103</ecNumber>
    </recommendedName>
</protein>
<sequence length="340" mass="37044">MKALVKREASKGIWLEQVPVPTPGPNEVLIKLEKTAICGTDLHIYLWDEWSQRTITPGLTIGHEFVGRVAELGSAVTGYQVGQRVSAEGHIVCGHCRNCRGGRPHLCPNTVGIGVNVNGAFAEYMVMPASNLWPIPDQIPSELAAFFDPYGNAAHCALEFDVIGEDVLITGAGPIGIIAAGICKHIGARNVVVTDVNDFRLKLAADLGATRVVNVSKTSLKDVMADLHMEGFDVGLEMSGNPRAFNDMLDCMYHGGKIAMLGIMPRGAGCDWDKIIFKGLTVQGIYGRKMYETWYKMTQLVLSGFPLQKVLTHQLSIDEFQKGFDLMEEGKAGKVVLSWN</sequence>
<dbReference type="EC" id="1.1.1.103" evidence="1"/>
<dbReference type="EMBL" id="AM920689">
    <property type="protein sequence ID" value="CAP52773.1"/>
    <property type="molecule type" value="Genomic_DNA"/>
</dbReference>
<dbReference type="SMR" id="B0RU31"/>
<dbReference type="KEGG" id="xca:xcc-b100_3408"/>
<dbReference type="HOGENOM" id="CLU_026673_11_0_6"/>
<dbReference type="UniPathway" id="UPA00046">
    <property type="reaction ID" value="UER00505"/>
</dbReference>
<dbReference type="Proteomes" id="UP000001188">
    <property type="component" value="Chromosome"/>
</dbReference>
<dbReference type="GO" id="GO:0005737">
    <property type="term" value="C:cytoplasm"/>
    <property type="evidence" value="ECO:0007669"/>
    <property type="project" value="UniProtKB-SubCell"/>
</dbReference>
<dbReference type="GO" id="GO:0008743">
    <property type="term" value="F:L-threonine 3-dehydrogenase activity"/>
    <property type="evidence" value="ECO:0007669"/>
    <property type="project" value="UniProtKB-UniRule"/>
</dbReference>
<dbReference type="GO" id="GO:0008270">
    <property type="term" value="F:zinc ion binding"/>
    <property type="evidence" value="ECO:0007669"/>
    <property type="project" value="UniProtKB-UniRule"/>
</dbReference>
<dbReference type="GO" id="GO:0019518">
    <property type="term" value="P:L-threonine catabolic process to glycine"/>
    <property type="evidence" value="ECO:0007669"/>
    <property type="project" value="UniProtKB-UniPathway"/>
</dbReference>
<dbReference type="Gene3D" id="3.90.180.10">
    <property type="entry name" value="Medium-chain alcohol dehydrogenases, catalytic domain"/>
    <property type="match status" value="1"/>
</dbReference>
<dbReference type="Gene3D" id="3.40.50.720">
    <property type="entry name" value="NAD(P)-binding Rossmann-like Domain"/>
    <property type="match status" value="1"/>
</dbReference>
<dbReference type="HAMAP" id="MF_00627">
    <property type="entry name" value="Thr_dehydrog"/>
    <property type="match status" value="1"/>
</dbReference>
<dbReference type="InterPro" id="IPR013149">
    <property type="entry name" value="ADH-like_C"/>
</dbReference>
<dbReference type="InterPro" id="IPR013154">
    <property type="entry name" value="ADH-like_N"/>
</dbReference>
<dbReference type="InterPro" id="IPR002328">
    <property type="entry name" value="ADH_Zn_CS"/>
</dbReference>
<dbReference type="InterPro" id="IPR011032">
    <property type="entry name" value="GroES-like_sf"/>
</dbReference>
<dbReference type="InterPro" id="IPR004627">
    <property type="entry name" value="L-Threonine_3-DHase"/>
</dbReference>
<dbReference type="InterPro" id="IPR036291">
    <property type="entry name" value="NAD(P)-bd_dom_sf"/>
</dbReference>
<dbReference type="InterPro" id="IPR020843">
    <property type="entry name" value="PKS_ER"/>
</dbReference>
<dbReference type="InterPro" id="IPR050129">
    <property type="entry name" value="Zn_alcohol_dh"/>
</dbReference>
<dbReference type="NCBIfam" id="NF003808">
    <property type="entry name" value="PRK05396.1"/>
    <property type="match status" value="1"/>
</dbReference>
<dbReference type="NCBIfam" id="TIGR00692">
    <property type="entry name" value="tdh"/>
    <property type="match status" value="1"/>
</dbReference>
<dbReference type="PANTHER" id="PTHR43401">
    <property type="entry name" value="L-THREONINE 3-DEHYDROGENASE"/>
    <property type="match status" value="1"/>
</dbReference>
<dbReference type="PANTHER" id="PTHR43401:SF2">
    <property type="entry name" value="L-THREONINE 3-DEHYDROGENASE"/>
    <property type="match status" value="1"/>
</dbReference>
<dbReference type="Pfam" id="PF08240">
    <property type="entry name" value="ADH_N"/>
    <property type="match status" value="1"/>
</dbReference>
<dbReference type="Pfam" id="PF00107">
    <property type="entry name" value="ADH_zinc_N"/>
    <property type="match status" value="1"/>
</dbReference>
<dbReference type="SMART" id="SM00829">
    <property type="entry name" value="PKS_ER"/>
    <property type="match status" value="1"/>
</dbReference>
<dbReference type="SUPFAM" id="SSF50129">
    <property type="entry name" value="GroES-like"/>
    <property type="match status" value="1"/>
</dbReference>
<dbReference type="SUPFAM" id="SSF51735">
    <property type="entry name" value="NAD(P)-binding Rossmann-fold domains"/>
    <property type="match status" value="1"/>
</dbReference>
<dbReference type="PROSITE" id="PS00059">
    <property type="entry name" value="ADH_ZINC"/>
    <property type="match status" value="1"/>
</dbReference>
<accession>B0RU31</accession>
<organism>
    <name type="scientific">Xanthomonas campestris pv. campestris (strain B100)</name>
    <dbReference type="NCBI Taxonomy" id="509169"/>
    <lineage>
        <taxon>Bacteria</taxon>
        <taxon>Pseudomonadati</taxon>
        <taxon>Pseudomonadota</taxon>
        <taxon>Gammaproteobacteria</taxon>
        <taxon>Lysobacterales</taxon>
        <taxon>Lysobacteraceae</taxon>
        <taxon>Xanthomonas</taxon>
    </lineage>
</organism>